<organism>
    <name type="scientific">Arabidopsis thaliana</name>
    <name type="common">Mouse-ear cress</name>
    <dbReference type="NCBI Taxonomy" id="3702"/>
    <lineage>
        <taxon>Eukaryota</taxon>
        <taxon>Viridiplantae</taxon>
        <taxon>Streptophyta</taxon>
        <taxon>Embryophyta</taxon>
        <taxon>Tracheophyta</taxon>
        <taxon>Spermatophyta</taxon>
        <taxon>Magnoliopsida</taxon>
        <taxon>eudicotyledons</taxon>
        <taxon>Gunneridae</taxon>
        <taxon>Pentapetalae</taxon>
        <taxon>rosids</taxon>
        <taxon>malvids</taxon>
        <taxon>Brassicales</taxon>
        <taxon>Brassicaceae</taxon>
        <taxon>Camelineae</taxon>
        <taxon>Arabidopsis</taxon>
    </lineage>
</organism>
<comment type="similarity">
    <text evidence="2">Belongs to the universal ribosomal protein uL13 family.</text>
</comment>
<gene>
    <name type="primary">RPL13AC</name>
    <name type="ordered locus">At4g13170</name>
    <name type="ORF">F17N18.60</name>
</gene>
<protein>
    <recommendedName>
        <fullName evidence="1">Large ribosomal subunit protein uL13x</fullName>
    </recommendedName>
    <alternativeName>
        <fullName>60S ribosomal protein L13a-3</fullName>
    </alternativeName>
</protein>
<evidence type="ECO:0000303" key="1">
    <source>
    </source>
</evidence>
<evidence type="ECO:0000305" key="2"/>
<reference key="1">
    <citation type="journal article" date="1999" name="Nature">
        <title>Sequence and analysis of chromosome 4 of the plant Arabidopsis thaliana.</title>
        <authorList>
            <person name="Mayer K.F.X."/>
            <person name="Schueller C."/>
            <person name="Wambutt R."/>
            <person name="Murphy G."/>
            <person name="Volckaert G."/>
            <person name="Pohl T."/>
            <person name="Duesterhoeft A."/>
            <person name="Stiekema W."/>
            <person name="Entian K.-D."/>
            <person name="Terryn N."/>
            <person name="Harris B."/>
            <person name="Ansorge W."/>
            <person name="Brandt P."/>
            <person name="Grivell L.A."/>
            <person name="Rieger M."/>
            <person name="Weichselgartner M."/>
            <person name="de Simone V."/>
            <person name="Obermaier B."/>
            <person name="Mache R."/>
            <person name="Mueller M."/>
            <person name="Kreis M."/>
            <person name="Delseny M."/>
            <person name="Puigdomenech P."/>
            <person name="Watson M."/>
            <person name="Schmidtheini T."/>
            <person name="Reichert B."/>
            <person name="Portetelle D."/>
            <person name="Perez-Alonso M."/>
            <person name="Boutry M."/>
            <person name="Bancroft I."/>
            <person name="Vos P."/>
            <person name="Hoheisel J."/>
            <person name="Zimmermann W."/>
            <person name="Wedler H."/>
            <person name="Ridley P."/>
            <person name="Langham S.-A."/>
            <person name="McCullagh B."/>
            <person name="Bilham L."/>
            <person name="Robben J."/>
            <person name="van der Schueren J."/>
            <person name="Grymonprez B."/>
            <person name="Chuang Y.-J."/>
            <person name="Vandenbussche F."/>
            <person name="Braeken M."/>
            <person name="Weltjens I."/>
            <person name="Voet M."/>
            <person name="Bastiaens I."/>
            <person name="Aert R."/>
            <person name="Defoor E."/>
            <person name="Weitzenegger T."/>
            <person name="Bothe G."/>
            <person name="Ramsperger U."/>
            <person name="Hilbert H."/>
            <person name="Braun M."/>
            <person name="Holzer E."/>
            <person name="Brandt A."/>
            <person name="Peters S."/>
            <person name="van Staveren M."/>
            <person name="Dirkse W."/>
            <person name="Mooijman P."/>
            <person name="Klein Lankhorst R."/>
            <person name="Rose M."/>
            <person name="Hauf J."/>
            <person name="Koetter P."/>
            <person name="Berneiser S."/>
            <person name="Hempel S."/>
            <person name="Feldpausch M."/>
            <person name="Lamberth S."/>
            <person name="Van den Daele H."/>
            <person name="De Keyser A."/>
            <person name="Buysshaert C."/>
            <person name="Gielen J."/>
            <person name="Villarroel R."/>
            <person name="De Clercq R."/>
            <person name="van Montagu M."/>
            <person name="Rogers J."/>
            <person name="Cronin A."/>
            <person name="Quail M.A."/>
            <person name="Bray-Allen S."/>
            <person name="Clark L."/>
            <person name="Doggett J."/>
            <person name="Hall S."/>
            <person name="Kay M."/>
            <person name="Lennard N."/>
            <person name="McLay K."/>
            <person name="Mayes R."/>
            <person name="Pettett A."/>
            <person name="Rajandream M.A."/>
            <person name="Lyne M."/>
            <person name="Benes V."/>
            <person name="Rechmann S."/>
            <person name="Borkova D."/>
            <person name="Bloecker H."/>
            <person name="Scharfe M."/>
            <person name="Grimm M."/>
            <person name="Loehnert T.-H."/>
            <person name="Dose S."/>
            <person name="de Haan M."/>
            <person name="Maarse A.C."/>
            <person name="Schaefer M."/>
            <person name="Mueller-Auer S."/>
            <person name="Gabel C."/>
            <person name="Fuchs M."/>
            <person name="Fartmann B."/>
            <person name="Granderath K."/>
            <person name="Dauner D."/>
            <person name="Herzl A."/>
            <person name="Neumann S."/>
            <person name="Argiriou A."/>
            <person name="Vitale D."/>
            <person name="Liguori R."/>
            <person name="Piravandi E."/>
            <person name="Massenet O."/>
            <person name="Quigley F."/>
            <person name="Clabauld G."/>
            <person name="Muendlein A."/>
            <person name="Felber R."/>
            <person name="Schnabl S."/>
            <person name="Hiller R."/>
            <person name="Schmidt W."/>
            <person name="Lecharny A."/>
            <person name="Aubourg S."/>
            <person name="Chefdor F."/>
            <person name="Cooke R."/>
            <person name="Berger C."/>
            <person name="Monfort A."/>
            <person name="Casacuberta E."/>
            <person name="Gibbons T."/>
            <person name="Weber N."/>
            <person name="Vandenbol M."/>
            <person name="Bargues M."/>
            <person name="Terol J."/>
            <person name="Torres A."/>
            <person name="Perez-Perez A."/>
            <person name="Purnelle B."/>
            <person name="Bent E."/>
            <person name="Johnson S."/>
            <person name="Tacon D."/>
            <person name="Jesse T."/>
            <person name="Heijnen L."/>
            <person name="Schwarz S."/>
            <person name="Scholler P."/>
            <person name="Heber S."/>
            <person name="Francs P."/>
            <person name="Bielke C."/>
            <person name="Frishman D."/>
            <person name="Haase D."/>
            <person name="Lemcke K."/>
            <person name="Mewes H.-W."/>
            <person name="Stocker S."/>
            <person name="Zaccaria P."/>
            <person name="Bevan M."/>
            <person name="Wilson R.K."/>
            <person name="de la Bastide M."/>
            <person name="Habermann K."/>
            <person name="Parnell L."/>
            <person name="Dedhia N."/>
            <person name="Gnoj L."/>
            <person name="Schutz K."/>
            <person name="Huang E."/>
            <person name="Spiegel L."/>
            <person name="Sekhon M."/>
            <person name="Murray J."/>
            <person name="Sheet P."/>
            <person name="Cordes M."/>
            <person name="Abu-Threideh J."/>
            <person name="Stoneking T."/>
            <person name="Kalicki J."/>
            <person name="Graves T."/>
            <person name="Harmon G."/>
            <person name="Edwards J."/>
            <person name="Latreille P."/>
            <person name="Courtney L."/>
            <person name="Cloud J."/>
            <person name="Abbott A."/>
            <person name="Scott K."/>
            <person name="Johnson D."/>
            <person name="Minx P."/>
            <person name="Bentley D."/>
            <person name="Fulton B."/>
            <person name="Miller N."/>
            <person name="Greco T."/>
            <person name="Kemp K."/>
            <person name="Kramer J."/>
            <person name="Fulton L."/>
            <person name="Mardis E."/>
            <person name="Dante M."/>
            <person name="Pepin K."/>
            <person name="Hillier L.W."/>
            <person name="Nelson J."/>
            <person name="Spieth J."/>
            <person name="Ryan E."/>
            <person name="Andrews S."/>
            <person name="Geisel C."/>
            <person name="Layman D."/>
            <person name="Du H."/>
            <person name="Ali J."/>
            <person name="Berghoff A."/>
            <person name="Jones K."/>
            <person name="Drone K."/>
            <person name="Cotton M."/>
            <person name="Joshu C."/>
            <person name="Antonoiu B."/>
            <person name="Zidanic M."/>
            <person name="Strong C."/>
            <person name="Sun H."/>
            <person name="Lamar B."/>
            <person name="Yordan C."/>
            <person name="Ma P."/>
            <person name="Zhong J."/>
            <person name="Preston R."/>
            <person name="Vil D."/>
            <person name="Shekher M."/>
            <person name="Matero A."/>
            <person name="Shah R."/>
            <person name="Swaby I.K."/>
            <person name="O'Shaughnessy A."/>
            <person name="Rodriguez M."/>
            <person name="Hoffman J."/>
            <person name="Till S."/>
            <person name="Granat S."/>
            <person name="Shohdy N."/>
            <person name="Hasegawa A."/>
            <person name="Hameed A."/>
            <person name="Lodhi M."/>
            <person name="Johnson A."/>
            <person name="Chen E."/>
            <person name="Marra M.A."/>
            <person name="Martienssen R."/>
            <person name="McCombie W.R."/>
        </authorList>
    </citation>
    <scope>NUCLEOTIDE SEQUENCE [LARGE SCALE GENOMIC DNA]</scope>
    <source>
        <strain>cv. Columbia</strain>
    </source>
</reference>
<reference key="2">
    <citation type="journal article" date="2017" name="Plant J.">
        <title>Araport11: a complete reannotation of the Arabidopsis thaliana reference genome.</title>
        <authorList>
            <person name="Cheng C.Y."/>
            <person name="Krishnakumar V."/>
            <person name="Chan A.P."/>
            <person name="Thibaud-Nissen F."/>
            <person name="Schobel S."/>
            <person name="Town C.D."/>
        </authorList>
    </citation>
    <scope>GENOME REANNOTATION</scope>
    <source>
        <strain>cv. Columbia</strain>
    </source>
</reference>
<reference key="3">
    <citation type="journal article" date="2003" name="Science">
        <title>Empirical analysis of transcriptional activity in the Arabidopsis genome.</title>
        <authorList>
            <person name="Yamada K."/>
            <person name="Lim J."/>
            <person name="Dale J.M."/>
            <person name="Chen H."/>
            <person name="Shinn P."/>
            <person name="Palm C.J."/>
            <person name="Southwick A.M."/>
            <person name="Wu H.C."/>
            <person name="Kim C.J."/>
            <person name="Nguyen M."/>
            <person name="Pham P.K."/>
            <person name="Cheuk R.F."/>
            <person name="Karlin-Newmann G."/>
            <person name="Liu S.X."/>
            <person name="Lam B."/>
            <person name="Sakano H."/>
            <person name="Wu T."/>
            <person name="Yu G."/>
            <person name="Miranda M."/>
            <person name="Quach H.L."/>
            <person name="Tripp M."/>
            <person name="Chang C.H."/>
            <person name="Lee J.M."/>
            <person name="Toriumi M.J."/>
            <person name="Chan M.M."/>
            <person name="Tang C.C."/>
            <person name="Onodera C.S."/>
            <person name="Deng J.M."/>
            <person name="Akiyama K."/>
            <person name="Ansari Y."/>
            <person name="Arakawa T."/>
            <person name="Banh J."/>
            <person name="Banno F."/>
            <person name="Bowser L."/>
            <person name="Brooks S.Y."/>
            <person name="Carninci P."/>
            <person name="Chao Q."/>
            <person name="Choy N."/>
            <person name="Enju A."/>
            <person name="Goldsmith A.D."/>
            <person name="Gurjal M."/>
            <person name="Hansen N.F."/>
            <person name="Hayashizaki Y."/>
            <person name="Johnson-Hopson C."/>
            <person name="Hsuan V.W."/>
            <person name="Iida K."/>
            <person name="Karnes M."/>
            <person name="Khan S."/>
            <person name="Koesema E."/>
            <person name="Ishida J."/>
            <person name="Jiang P.X."/>
            <person name="Jones T."/>
            <person name="Kawai J."/>
            <person name="Kamiya A."/>
            <person name="Meyers C."/>
            <person name="Nakajima M."/>
            <person name="Narusaka M."/>
            <person name="Seki M."/>
            <person name="Sakurai T."/>
            <person name="Satou M."/>
            <person name="Tamse R."/>
            <person name="Vaysberg M."/>
            <person name="Wallender E.K."/>
            <person name="Wong C."/>
            <person name="Yamamura Y."/>
            <person name="Yuan S."/>
            <person name="Shinozaki K."/>
            <person name="Davis R.W."/>
            <person name="Theologis A."/>
            <person name="Ecker J.R."/>
        </authorList>
    </citation>
    <scope>NUCLEOTIDE SEQUENCE [LARGE SCALE MRNA]</scope>
    <source>
        <strain>cv. Columbia</strain>
    </source>
</reference>
<reference key="4">
    <citation type="journal article" date="2001" name="Plant Physiol.">
        <title>The organization of cytoplasmic ribosomal protein genes in the Arabidopsis genome.</title>
        <authorList>
            <person name="Barakat A."/>
            <person name="Szick-Miranda K."/>
            <person name="Chang I.-F."/>
            <person name="Guyot R."/>
            <person name="Blanc G."/>
            <person name="Cooke R."/>
            <person name="Delseny M."/>
            <person name="Bailey-Serres J."/>
        </authorList>
    </citation>
    <scope>GENE FAMILY ORGANIZATION</scope>
    <scope>NOMENCLATURE</scope>
</reference>
<reference key="5">
    <citation type="journal article" date="2023" name="Plant Cell">
        <title>An updated nomenclature for plant ribosomal protein genes.</title>
        <authorList>
            <person name="Scarpin M.R."/>
            <person name="Busche M."/>
            <person name="Martinez R.E."/>
            <person name="Harper L.C."/>
            <person name="Reiser L."/>
            <person name="Szakonyi D."/>
            <person name="Merchante C."/>
            <person name="Lan T."/>
            <person name="Xiong W."/>
            <person name="Mo B."/>
            <person name="Tang G."/>
            <person name="Chen X."/>
            <person name="Bailey-Serres J."/>
            <person name="Browning K.S."/>
            <person name="Brunkard J.O."/>
        </authorList>
    </citation>
    <scope>NOMENCLATURE</scope>
</reference>
<name>R13A3_ARATH</name>
<sequence>MVSGSGICAKRVVVDGRHHMLGRLASNTAKELLNGQEVVVVRCEEICLSGGLVRQKMKYMRFLRKRMNTKPSHGPIHFRAPSKIFWRTVRGMIPHKTKRGAAALARLKVFEGIPPPYDKIKRMVIPDALKVLRLQSGHKYCLLGRLSSEVGWNHYDTIKELETKRKERSQVMYERKKQLNKLRTKAEKVAEERLGSQLDVLAPVKY</sequence>
<accession>Q9SVR0</accession>
<dbReference type="EMBL" id="AL049751">
    <property type="protein sequence ID" value="CAB41927.1"/>
    <property type="molecule type" value="Genomic_DNA"/>
</dbReference>
<dbReference type="EMBL" id="AL161535">
    <property type="protein sequence ID" value="CAB78359.1"/>
    <property type="molecule type" value="Genomic_DNA"/>
</dbReference>
<dbReference type="EMBL" id="CP002687">
    <property type="protein sequence ID" value="AEE83240.1"/>
    <property type="molecule type" value="Genomic_DNA"/>
</dbReference>
<dbReference type="EMBL" id="AY052263">
    <property type="protein sequence ID" value="AAK97733.1"/>
    <property type="molecule type" value="mRNA"/>
</dbReference>
<dbReference type="EMBL" id="AY060518">
    <property type="protein sequence ID" value="AAL31131.1"/>
    <property type="molecule type" value="mRNA"/>
</dbReference>
<dbReference type="PIR" id="T07697">
    <property type="entry name" value="T07697"/>
</dbReference>
<dbReference type="RefSeq" id="NP_193053.1">
    <property type="nucleotide sequence ID" value="NM_117386.5"/>
</dbReference>
<dbReference type="SMR" id="Q9SVR0"/>
<dbReference type="BioGRID" id="12228">
    <property type="interactions" value="42"/>
</dbReference>
<dbReference type="FunCoup" id="Q9SVR0">
    <property type="interactions" value="2993"/>
</dbReference>
<dbReference type="STRING" id="3702.Q9SVR0"/>
<dbReference type="iPTMnet" id="Q9SVR0"/>
<dbReference type="PaxDb" id="3702-AT4G13170.1"/>
<dbReference type="ProteomicsDB" id="226146"/>
<dbReference type="EnsemblPlants" id="AT4G13170.1">
    <property type="protein sequence ID" value="AT4G13170.1"/>
    <property type="gene ID" value="AT4G13170"/>
</dbReference>
<dbReference type="GeneID" id="826931"/>
<dbReference type="Gramene" id="AT4G13170.1">
    <property type="protein sequence ID" value="AT4G13170.1"/>
    <property type="gene ID" value="AT4G13170"/>
</dbReference>
<dbReference type="KEGG" id="ath:AT4G13170"/>
<dbReference type="Araport" id="AT4G13170"/>
<dbReference type="TAIR" id="AT4G13170"/>
<dbReference type="eggNOG" id="KOG3204">
    <property type="taxonomic scope" value="Eukaryota"/>
</dbReference>
<dbReference type="HOGENOM" id="CLU_076922_0_0_1"/>
<dbReference type="InParanoid" id="Q9SVR0"/>
<dbReference type="OMA" id="TRFNKTH"/>
<dbReference type="OrthoDB" id="1882297at2759"/>
<dbReference type="PhylomeDB" id="Q9SVR0"/>
<dbReference type="PRO" id="PR:Q9SVR0"/>
<dbReference type="Proteomes" id="UP000006548">
    <property type="component" value="Chromosome 4"/>
</dbReference>
<dbReference type="ExpressionAtlas" id="Q9SVR0">
    <property type="expression patterns" value="baseline and differential"/>
</dbReference>
<dbReference type="GO" id="GO:0005829">
    <property type="term" value="C:cytosol"/>
    <property type="evidence" value="ECO:0007005"/>
    <property type="project" value="TAIR"/>
</dbReference>
<dbReference type="GO" id="GO:0022625">
    <property type="term" value="C:cytosolic large ribosomal subunit"/>
    <property type="evidence" value="ECO:0007005"/>
    <property type="project" value="TAIR"/>
</dbReference>
<dbReference type="GO" id="GO:0003735">
    <property type="term" value="F:structural constituent of ribosome"/>
    <property type="evidence" value="ECO:0000314"/>
    <property type="project" value="CAFA"/>
</dbReference>
<dbReference type="GO" id="GO:0006412">
    <property type="term" value="P:translation"/>
    <property type="evidence" value="ECO:0007669"/>
    <property type="project" value="InterPro"/>
</dbReference>
<dbReference type="CDD" id="cd00392">
    <property type="entry name" value="Ribosomal_L13"/>
    <property type="match status" value="1"/>
</dbReference>
<dbReference type="FunFam" id="6.10.250.3250:FF:000001">
    <property type="entry name" value="60S ribosomal protein L13a"/>
    <property type="match status" value="1"/>
</dbReference>
<dbReference type="FunFam" id="3.90.1180.10:FF:000003">
    <property type="entry name" value="60S ribosomal protein L13a-4"/>
    <property type="match status" value="1"/>
</dbReference>
<dbReference type="Gene3D" id="6.10.250.3250">
    <property type="match status" value="1"/>
</dbReference>
<dbReference type="Gene3D" id="3.90.1180.10">
    <property type="entry name" value="Ribosomal protein L13"/>
    <property type="match status" value="1"/>
</dbReference>
<dbReference type="HAMAP" id="MF_01366">
    <property type="entry name" value="Ribosomal_uL13"/>
    <property type="match status" value="1"/>
</dbReference>
<dbReference type="InterPro" id="IPR005822">
    <property type="entry name" value="Ribosomal_uL13"/>
</dbReference>
<dbReference type="InterPro" id="IPR023563">
    <property type="entry name" value="Ribosomal_uL13_CS"/>
</dbReference>
<dbReference type="InterPro" id="IPR005755">
    <property type="entry name" value="Ribosomal_uL13_euk/arc"/>
</dbReference>
<dbReference type="InterPro" id="IPR036899">
    <property type="entry name" value="Ribosomal_uL13_sf"/>
</dbReference>
<dbReference type="NCBIfam" id="TIGR01077">
    <property type="entry name" value="L13_A_E"/>
    <property type="match status" value="1"/>
</dbReference>
<dbReference type="PANTHER" id="PTHR11545:SF39">
    <property type="entry name" value="LARGE RIBOSOMAL SUBUNIT PROTEIN UL13X-RELATED"/>
    <property type="match status" value="1"/>
</dbReference>
<dbReference type="PANTHER" id="PTHR11545">
    <property type="entry name" value="RIBOSOMAL PROTEIN L13"/>
    <property type="match status" value="1"/>
</dbReference>
<dbReference type="Pfam" id="PF00572">
    <property type="entry name" value="Ribosomal_L13"/>
    <property type="match status" value="1"/>
</dbReference>
<dbReference type="SUPFAM" id="SSF52161">
    <property type="entry name" value="Ribosomal protein L13"/>
    <property type="match status" value="1"/>
</dbReference>
<dbReference type="PROSITE" id="PS00783">
    <property type="entry name" value="RIBOSOMAL_L13"/>
    <property type="match status" value="1"/>
</dbReference>
<proteinExistence type="evidence at transcript level"/>
<keyword id="KW-1185">Reference proteome</keyword>
<keyword id="KW-0687">Ribonucleoprotein</keyword>
<keyword id="KW-0689">Ribosomal protein</keyword>
<feature type="chain" id="PRO_0000133782" description="Large ribosomal subunit protein uL13x">
    <location>
        <begin position="1"/>
        <end position="206"/>
    </location>
</feature>